<organism>
    <name type="scientific">Talaromyces verruculosus</name>
    <name type="common">Penicillium verruculosum</name>
    <dbReference type="NCBI Taxonomy" id="198730"/>
    <lineage>
        <taxon>Eukaryota</taxon>
        <taxon>Fungi</taxon>
        <taxon>Dikarya</taxon>
        <taxon>Ascomycota</taxon>
        <taxon>Pezizomycotina</taxon>
        <taxon>Eurotiomycetes</taxon>
        <taxon>Eurotiomycetidae</taxon>
        <taxon>Eurotiales</taxon>
        <taxon>Trichocomaceae</taxon>
        <taxon>Talaromyces</taxon>
        <taxon>Talaromyces sect. Talaromyces</taxon>
    </lineage>
</organism>
<protein>
    <recommendedName>
        <fullName evidence="11">Preasperterpenoid A synthase PvPS</fullName>
    </recommendedName>
    <alternativeName>
        <fullName evidence="11">Bifunctional sesterterpene synthase PvPS</fullName>
        <shortName evidence="11">PS</shortName>
    </alternativeName>
    <domain>
        <recommendedName>
            <fullName evidence="11">Preasperterpenoid A cyclase</fullName>
            <ecNumber evidence="9 10">4.2.3.-</ecNumber>
        </recommendedName>
    </domain>
    <domain>
        <recommendedName>
            <fullName evidence="11">Geranylgeranyl diphosphate synthase</fullName>
            <shortName evidence="11">GGDP synthase</shortName>
            <shortName evidence="11">GGS</shortName>
            <ecNumber evidence="9">2.5.1.29</ecNumber>
        </recommendedName>
    </domain>
    <domain>
        <recommendedName>
            <fullName evidence="11">Geranylfarnesyl diphosphate synthase</fullName>
            <shortName evidence="11">GFDP synthase</shortName>
            <ecNumber evidence="9">2.5.1.81</ecNumber>
        </recommendedName>
    </domain>
</protein>
<accession>A0A2Z6AQX6</accession>
<evidence type="ECO:0000250" key="1">
    <source>
        <dbReference type="UniProtKB" id="A1C8C3"/>
    </source>
</evidence>
<evidence type="ECO:0000250" key="2">
    <source>
        <dbReference type="UniProtKB" id="A2PZA5"/>
    </source>
</evidence>
<evidence type="ECO:0000250" key="3">
    <source>
        <dbReference type="UniProtKB" id="M2V8C1"/>
    </source>
</evidence>
<evidence type="ECO:0000250" key="4">
    <source>
        <dbReference type="UniProtKB" id="P9WEV6"/>
    </source>
</evidence>
<evidence type="ECO:0000250" key="5">
    <source>
        <dbReference type="UniProtKB" id="P9WEV7"/>
    </source>
</evidence>
<evidence type="ECO:0000250" key="6">
    <source>
        <dbReference type="UniProtKB" id="Q12051"/>
    </source>
</evidence>
<evidence type="ECO:0000250" key="7">
    <source>
        <dbReference type="UniProtKB" id="Q40577"/>
    </source>
</evidence>
<evidence type="ECO:0000256" key="8">
    <source>
        <dbReference type="SAM" id="MobiDB-lite"/>
    </source>
</evidence>
<evidence type="ECO:0000269" key="9">
    <source>
    </source>
</evidence>
<evidence type="ECO:0000269" key="10">
    <source>
    </source>
</evidence>
<evidence type="ECO:0000303" key="11">
    <source>
    </source>
</evidence>
<evidence type="ECO:0000305" key="12"/>
<evidence type="ECO:0000305" key="13">
    <source>
    </source>
</evidence>
<keyword id="KW-0414">Isoprene biosynthesis</keyword>
<keyword id="KW-0456">Lyase</keyword>
<keyword id="KW-0460">Magnesium</keyword>
<keyword id="KW-0479">Metal-binding</keyword>
<keyword id="KW-0511">Multifunctional enzyme</keyword>
<keyword id="KW-0677">Repeat</keyword>
<keyword id="KW-0808">Transferase</keyword>
<dbReference type="EC" id="4.2.3.-" evidence="9 10"/>
<dbReference type="EC" id="2.5.1.29" evidence="9"/>
<dbReference type="EC" id="2.5.1.81" evidence="9"/>
<dbReference type="EMBL" id="LC228602">
    <property type="protein sequence ID" value="BBD05405.1"/>
    <property type="molecule type" value="Genomic_DNA"/>
</dbReference>
<dbReference type="SMR" id="A0A2Z6AQX6"/>
<dbReference type="UniPathway" id="UPA00213"/>
<dbReference type="GO" id="GO:0016829">
    <property type="term" value="F:lyase activity"/>
    <property type="evidence" value="ECO:0007669"/>
    <property type="project" value="UniProtKB-KW"/>
</dbReference>
<dbReference type="GO" id="GO:0046872">
    <property type="term" value="F:metal ion binding"/>
    <property type="evidence" value="ECO:0007669"/>
    <property type="project" value="UniProtKB-KW"/>
</dbReference>
<dbReference type="GO" id="GO:0004659">
    <property type="term" value="F:prenyltransferase activity"/>
    <property type="evidence" value="ECO:0007669"/>
    <property type="project" value="InterPro"/>
</dbReference>
<dbReference type="GO" id="GO:0046165">
    <property type="term" value="P:alcohol biosynthetic process"/>
    <property type="evidence" value="ECO:0007669"/>
    <property type="project" value="UniProtKB-ARBA"/>
</dbReference>
<dbReference type="GO" id="GO:0043386">
    <property type="term" value="P:mycotoxin biosynthetic process"/>
    <property type="evidence" value="ECO:0007669"/>
    <property type="project" value="UniProtKB-ARBA"/>
</dbReference>
<dbReference type="GO" id="GO:0016114">
    <property type="term" value="P:terpenoid biosynthetic process"/>
    <property type="evidence" value="ECO:0007669"/>
    <property type="project" value="UniProtKB-UniPathway"/>
</dbReference>
<dbReference type="CDD" id="cd00685">
    <property type="entry name" value="Trans_IPPS_HT"/>
    <property type="match status" value="1"/>
</dbReference>
<dbReference type="Gene3D" id="1.10.600.10">
    <property type="entry name" value="Farnesyl Diphosphate Synthase"/>
    <property type="match status" value="2"/>
</dbReference>
<dbReference type="InterPro" id="IPR008949">
    <property type="entry name" value="Isoprenoid_synthase_dom_sf"/>
</dbReference>
<dbReference type="InterPro" id="IPR000092">
    <property type="entry name" value="Polyprenyl_synt"/>
</dbReference>
<dbReference type="InterPro" id="IPR033749">
    <property type="entry name" value="Polyprenyl_synt_CS"/>
</dbReference>
<dbReference type="PANTHER" id="PTHR12001">
    <property type="entry name" value="GERANYLGERANYL PYROPHOSPHATE SYNTHASE"/>
    <property type="match status" value="1"/>
</dbReference>
<dbReference type="PANTHER" id="PTHR12001:SF72">
    <property type="entry name" value="THIJ_PFPI FAMILY PROTEIN (AFU_ORTHOLOGUE AFUA_3G01210)-RELATED"/>
    <property type="match status" value="1"/>
</dbReference>
<dbReference type="Pfam" id="PF00348">
    <property type="entry name" value="polyprenyl_synt"/>
    <property type="match status" value="1"/>
</dbReference>
<dbReference type="Pfam" id="PF19086">
    <property type="entry name" value="Terpene_syn_C_2"/>
    <property type="match status" value="1"/>
</dbReference>
<dbReference type="SFLD" id="SFLDS00005">
    <property type="entry name" value="Isoprenoid_Synthase_Type_I"/>
    <property type="match status" value="1"/>
</dbReference>
<dbReference type="SUPFAM" id="SSF48576">
    <property type="entry name" value="Terpenoid synthases"/>
    <property type="match status" value="2"/>
</dbReference>
<dbReference type="PROSITE" id="PS00723">
    <property type="entry name" value="POLYPRENYL_SYNTHASE_1"/>
    <property type="match status" value="1"/>
</dbReference>
<dbReference type="PROSITE" id="PS00444">
    <property type="entry name" value="POLYPRENYL_SYNTHASE_2"/>
    <property type="match status" value="1"/>
</dbReference>
<feature type="chain" id="PRO_0000453791" description="Preasperterpenoid A synthase PvPS">
    <location>
        <begin position="1"/>
        <end position="778"/>
    </location>
</feature>
<feature type="region of interest" description="Terpene cyclase" evidence="13">
    <location>
        <begin position="1"/>
        <end position="414"/>
    </location>
</feature>
<feature type="region of interest" description="Prenyltransferase" evidence="13">
    <location>
        <begin position="415"/>
        <end position="778"/>
    </location>
</feature>
<feature type="region of interest" description="Disordered" evidence="3">
    <location>
        <begin position="416"/>
        <end position="454"/>
    </location>
</feature>
<feature type="short sequence motif" description="DDXXD 1" evidence="1">
    <location>
        <begin position="176"/>
        <end position="180"/>
    </location>
</feature>
<feature type="short sequence motif" description="NSE/DTE" evidence="1">
    <location>
        <begin position="310"/>
        <end position="318"/>
    </location>
</feature>
<feature type="short sequence motif" description="DDXXD 2" evidence="1">
    <location>
        <begin position="538"/>
        <end position="542"/>
    </location>
</feature>
<feature type="compositionally biased region" description="Basic and acidic residues" evidence="8">
    <location>
        <begin position="414"/>
        <end position="431"/>
    </location>
</feature>
<feature type="binding site" evidence="7">
    <location>
        <position position="176"/>
    </location>
    <ligand>
        <name>Mg(2+)</name>
        <dbReference type="ChEBI" id="CHEBI:18420"/>
        <label>1</label>
    </ligand>
</feature>
<feature type="binding site" evidence="7">
    <location>
        <position position="176"/>
    </location>
    <ligand>
        <name>Mg(2+)</name>
        <dbReference type="ChEBI" id="CHEBI:18420"/>
        <label>2</label>
    </ligand>
</feature>
<feature type="binding site" evidence="2">
    <location>
        <position position="176"/>
    </location>
    <ligand>
        <name>substrate</name>
    </ligand>
</feature>
<feature type="binding site" evidence="7">
    <location>
        <position position="180"/>
    </location>
    <ligand>
        <name>Mg(2+)</name>
        <dbReference type="ChEBI" id="CHEBI:18420"/>
        <label>1</label>
    </ligand>
</feature>
<feature type="binding site" evidence="7">
    <location>
        <position position="180"/>
    </location>
    <ligand>
        <name>Mg(2+)</name>
        <dbReference type="ChEBI" id="CHEBI:18420"/>
        <label>2</label>
    </ligand>
</feature>
<feature type="binding site" evidence="2">
    <location>
        <begin position="266"/>
        <end position="269"/>
    </location>
    <ligand>
        <name>substrate</name>
    </ligand>
</feature>
<feature type="binding site" evidence="2">
    <location>
        <position position="310"/>
    </location>
    <ligand>
        <name>substrate</name>
    </ligand>
</feature>
<feature type="binding site" evidence="2">
    <location>
        <begin position="314"/>
        <end position="318"/>
    </location>
    <ligand>
        <name>substrate</name>
    </ligand>
</feature>
<feature type="binding site" evidence="2">
    <location>
        <begin position="406"/>
        <end position="407"/>
    </location>
    <ligand>
        <name>substrate</name>
    </ligand>
</feature>
<feature type="binding site" evidence="6">
    <location>
        <position position="499"/>
    </location>
    <ligand>
        <name>isopentenyl diphosphate</name>
        <dbReference type="ChEBI" id="CHEBI:128769"/>
    </ligand>
</feature>
<feature type="binding site" evidence="6">
    <location>
        <position position="502"/>
    </location>
    <ligand>
        <name>isopentenyl diphosphate</name>
        <dbReference type="ChEBI" id="CHEBI:128769"/>
    </ligand>
</feature>
<feature type="binding site" evidence="6">
    <location>
        <position position="531"/>
    </location>
    <ligand>
        <name>isopentenyl diphosphate</name>
        <dbReference type="ChEBI" id="CHEBI:128769"/>
    </ligand>
</feature>
<feature type="binding site" evidence="6">
    <location>
        <position position="538"/>
    </location>
    <ligand>
        <name>Mg(2+)</name>
        <dbReference type="ChEBI" id="CHEBI:18420"/>
        <label>3</label>
    </ligand>
</feature>
<feature type="binding site" evidence="6">
    <location>
        <position position="538"/>
    </location>
    <ligand>
        <name>Mg(2+)</name>
        <dbReference type="ChEBI" id="CHEBI:18420"/>
        <label>4</label>
    </ligand>
</feature>
<feature type="binding site" evidence="6">
    <location>
        <position position="542"/>
    </location>
    <ligand>
        <name>Mg(2+)</name>
        <dbReference type="ChEBI" id="CHEBI:18420"/>
        <label>3</label>
    </ligand>
</feature>
<feature type="binding site" evidence="6">
    <location>
        <position position="542"/>
    </location>
    <ligand>
        <name>Mg(2+)</name>
        <dbReference type="ChEBI" id="CHEBI:18420"/>
        <label>4</label>
    </ligand>
</feature>
<feature type="binding site" evidence="6">
    <location>
        <position position="547"/>
    </location>
    <ligand>
        <name>dimethylallyl diphosphate</name>
        <dbReference type="ChEBI" id="CHEBI:57623"/>
    </ligand>
</feature>
<feature type="binding site" evidence="6">
    <location>
        <position position="548"/>
    </location>
    <ligand>
        <name>isopentenyl diphosphate</name>
        <dbReference type="ChEBI" id="CHEBI:128769"/>
    </ligand>
</feature>
<feature type="binding site" evidence="6">
    <location>
        <position position="625"/>
    </location>
    <ligand>
        <name>dimethylallyl diphosphate</name>
        <dbReference type="ChEBI" id="CHEBI:57623"/>
    </ligand>
</feature>
<feature type="binding site" evidence="6">
    <location>
        <position position="626"/>
    </location>
    <ligand>
        <name>dimethylallyl diphosphate</name>
        <dbReference type="ChEBI" id="CHEBI:57623"/>
    </ligand>
</feature>
<feature type="binding site" evidence="6">
    <location>
        <position position="662"/>
    </location>
    <ligand>
        <name>dimethylallyl diphosphate</name>
        <dbReference type="ChEBI" id="CHEBI:57623"/>
    </ligand>
</feature>
<feature type="binding site" evidence="6">
    <location>
        <position position="669"/>
    </location>
    <ligand>
        <name>dimethylallyl diphosphate</name>
        <dbReference type="ChEBI" id="CHEBI:57623"/>
    </ligand>
</feature>
<feature type="binding site" evidence="6">
    <location>
        <position position="679"/>
    </location>
    <ligand>
        <name>dimethylallyl diphosphate</name>
        <dbReference type="ChEBI" id="CHEBI:57623"/>
    </ligand>
</feature>
<feature type="binding site" evidence="6">
    <location>
        <position position="689"/>
    </location>
    <ligand>
        <name>dimethylallyl diphosphate</name>
        <dbReference type="ChEBI" id="CHEBI:57623"/>
    </ligand>
</feature>
<proteinExistence type="evidence at protein level"/>
<comment type="function">
    <text evidence="9 10">Bifunctional sesterterpene synthase that possesses both prenyl transferase and terpene cyclase activity, converting isopentenyl diphosphate and dimethylallyl diphosphate into geranylfarnesyl diphosphate (GFPP) and further converting GFPP into preasperterpenoid A.</text>
</comment>
<comment type="catalytic activity">
    <reaction evidence="9">
        <text>isopentenyl diphosphate + (2E,6E)-farnesyl diphosphate = (2E,6E,10E)-geranylgeranyl diphosphate + diphosphate</text>
        <dbReference type="Rhea" id="RHEA:17653"/>
        <dbReference type="ChEBI" id="CHEBI:33019"/>
        <dbReference type="ChEBI" id="CHEBI:58756"/>
        <dbReference type="ChEBI" id="CHEBI:128769"/>
        <dbReference type="ChEBI" id="CHEBI:175763"/>
        <dbReference type="EC" id="2.5.1.29"/>
    </reaction>
    <physiologicalReaction direction="left-to-right" evidence="9">
        <dbReference type="Rhea" id="RHEA:17654"/>
    </physiologicalReaction>
</comment>
<comment type="catalytic activity">
    <reaction evidence="9">
        <text>isopentenyl diphosphate + (2E,6E,10E)-geranylgeranyl diphosphate = (2E,6E,10E,14E)-geranylfarnesyl diphosphate + diphosphate</text>
        <dbReference type="Rhea" id="RHEA:25694"/>
        <dbReference type="ChEBI" id="CHEBI:33019"/>
        <dbReference type="ChEBI" id="CHEBI:57907"/>
        <dbReference type="ChEBI" id="CHEBI:58756"/>
        <dbReference type="ChEBI" id="CHEBI:128769"/>
        <dbReference type="EC" id="2.5.1.81"/>
    </reaction>
    <physiologicalReaction direction="left-to-right" evidence="9">
        <dbReference type="Rhea" id="RHEA:25695"/>
    </physiologicalReaction>
</comment>
<comment type="catalytic activity">
    <reaction evidence="9 10">
        <text>(2E,6E,10E,14E)-geranylfarnesyl diphosphate = preasperterpenoid A + diphosphate</text>
        <dbReference type="Rhea" id="RHEA:66832"/>
        <dbReference type="ChEBI" id="CHEBI:33019"/>
        <dbReference type="ChEBI" id="CHEBI:57907"/>
        <dbReference type="ChEBI" id="CHEBI:167511"/>
    </reaction>
    <physiologicalReaction direction="left-to-right" evidence="9">
        <dbReference type="Rhea" id="RHEA:66833"/>
    </physiologicalReaction>
</comment>
<comment type="cofactor">
    <cofactor evidence="5">
        <name>Mg(2+)</name>
        <dbReference type="ChEBI" id="CHEBI:18420"/>
    </cofactor>
</comment>
<comment type="pathway">
    <text evidence="9">Secondary metabolite biosynthesis; terpenoid biosynthesis.</text>
</comment>
<comment type="subunit">
    <text evidence="2">Hexamer.</text>
</comment>
<comment type="domain">
    <text evidence="4">The conserved DDXXD motifs as well as the NSE/DTE motif are important for the catalytic activity, presumably through binding to Mg(2+).</text>
</comment>
<comment type="similarity">
    <text evidence="12">In the N-terminal section; belongs to the terpene synthase family.</text>
</comment>
<comment type="similarity">
    <text evidence="12">In the C-terminal section; belongs to the FPP/GGPP synthase family.</text>
</comment>
<sequence length="778" mass="87884">MAATKKSTATAAHQIIPSQPTSMSADKFLFSCLQVFVLFFEWARSFLLSTQSRLSAVPAENARLEPSKPISEEEESVIEKPASSITPRYSNLVDPSTYNDLGLCSALPLRVHKFAHLADKGALRAQEDWKRLVGPIRNFTGCLSPRFNGIAVAVPECIPERLEIVTYANEFAFLHDDILDNVGKEEGDHENNEMAAGFGSVLNPADNVKMSASGKSQMQAKLILELLAINEPQAMVLLKCWEGLVKGESGSQHFNFQRLDEYLPHRVINLGQTFWFGIITFAMGLTISPDEAEKANNITDPAYATLALANDYFSWEKEYIEFKQNPTSDDMANAIWIIMKEHSVDLEEAKKICQDKIRESCEEYVRRHRQFEREATGKVSTDLLRYLAALEFSISGNVVWSQYTHRYNFHKPAAKENEDTDDEGAKSDDSKTTLNDSTDSTVVDVKTPATSGLLSSANDVLMSRTAKSLVGPILDVQLPELPDKVVLSPSQYVKSLPSKKVRHHAIDALNIWFNVPEAELEVIKEAIDLLHNSSLMLDDIEDDSPLRRGFPSTHVVYGISQTINSANYLYVMALEMTQRLNSPACLNVFIDELKRLHIGQSLDLYWTANVQCPSLEEYLKMVDYKTGGLFQMVAKLMALKSPMAGRVPDLSNMTTLFGRYFQIRDDYQNLMSEEYTNQKGWCEDLDEGKFSLPLIHSLTTKPNVRLQAMLHQRLINGKMTFEMKKLALDHLAETKSLEYTKEMLGYMYTQLQKEVDFLERQTGSENFLLRLLLKRLQV</sequence>
<reference key="1">
    <citation type="journal article" date="2017" name="Chemistry">
        <title>Mechanistic Characterization of Two Chimeric Sesterterpene Synthases from Penicillium.</title>
        <authorList>
            <person name="Mitsuhashi T."/>
            <person name="Rinkel J."/>
            <person name="Okada M."/>
            <person name="Abe I."/>
            <person name="Dickschat J.S."/>
        </authorList>
    </citation>
    <scope>NUCLEOTIDE SEQUENCE [GENOMIC DNA]</scope>
    <scope>FUNCTION</scope>
    <scope>CATALYTIC ACTIVITY</scope>
    <source>
        <strain>TPU1311</strain>
    </source>
</reference>
<reference key="2">
    <citation type="journal article" date="2020" name="Chem. Pharm. Bull.">
        <title>DFT study on the biosynthesis of preasperterpenoid A: role of secondary carbocations in the carbocation cascade.</title>
        <authorList>
            <person name="Sato H."/>
            <person name="Yamazaki M."/>
            <person name="Uchiyama M."/>
        </authorList>
    </citation>
    <scope>FUNCTION</scope>
    <scope>CATALYTIC ACTIVITY</scope>
</reference>
<gene>
    <name evidence="11" type="primary">PvPS</name>
</gene>
<name>PVPS_TALVE</name>